<sequence length="159" mass="18127">MVRIGLQLKANLENVTNLKAEGEDFRWYLMLKCMNCGEVTKQWVYMCLMESQPVKGGRGYAHFVSKCKLCHRENSVDIMKDSIHPYLASHNGKFHTIVSFDCRGVEPTDFSPRTGWTAEGENTSTPFEVDLTEKDWSDYDEKAQNAVGVYGVTSQFIKL</sequence>
<evidence type="ECO:0000250" key="1">
    <source>
        <dbReference type="UniProtKB" id="Q9NWV4"/>
    </source>
</evidence>
<evidence type="ECO:0000305" key="2"/>
<name>U587_NEMVE</name>
<protein>
    <recommendedName>
        <fullName>UPF0587 protein v1g245604</fullName>
    </recommendedName>
</protein>
<comment type="domain">
    <text evidence="1">Requires a bound zinc ion for normal folding and solubility.</text>
</comment>
<comment type="similarity">
    <text evidence="2">Belongs to the UPF0587 family.</text>
</comment>
<reference key="1">
    <citation type="journal article" date="2007" name="Science">
        <title>Sea anemone genome reveals ancestral eumetazoan gene repertoire and genomic organization.</title>
        <authorList>
            <person name="Putnam N.H."/>
            <person name="Srivastava M."/>
            <person name="Hellsten U."/>
            <person name="Dirks B."/>
            <person name="Chapman J."/>
            <person name="Salamov A."/>
            <person name="Terry A."/>
            <person name="Shapiro H."/>
            <person name="Lindquist E."/>
            <person name="Kapitonov V.V."/>
            <person name="Jurka J."/>
            <person name="Genikhovich G."/>
            <person name="Grigoriev I.V."/>
            <person name="Lucas S.M."/>
            <person name="Steele R.E."/>
            <person name="Finnerty J.R."/>
            <person name="Technau U."/>
            <person name="Martindale M.Q."/>
            <person name="Rokhsar D.S."/>
        </authorList>
    </citation>
    <scope>NUCLEOTIDE SEQUENCE [LARGE SCALE GENOMIC DNA]</scope>
    <source>
        <strain>CH2 X CH6</strain>
    </source>
</reference>
<gene>
    <name type="ORF">v1g245604</name>
</gene>
<organism>
    <name type="scientific">Nematostella vectensis</name>
    <name type="common">Starlet sea anemone</name>
    <dbReference type="NCBI Taxonomy" id="45351"/>
    <lineage>
        <taxon>Eukaryota</taxon>
        <taxon>Metazoa</taxon>
        <taxon>Cnidaria</taxon>
        <taxon>Anthozoa</taxon>
        <taxon>Hexacorallia</taxon>
        <taxon>Actiniaria</taxon>
        <taxon>Edwardsiidae</taxon>
        <taxon>Nematostella</taxon>
    </lineage>
</organism>
<proteinExistence type="inferred from homology"/>
<dbReference type="EMBL" id="DS469675">
    <property type="protein sequence ID" value="EDO36244.1"/>
    <property type="molecule type" value="Genomic_DNA"/>
</dbReference>
<dbReference type="SMR" id="A7SJ66"/>
<dbReference type="FunCoup" id="A7SJ66">
    <property type="interactions" value="761"/>
</dbReference>
<dbReference type="STRING" id="45351.A7SJ66"/>
<dbReference type="EnsemblMetazoa" id="EDO36244">
    <property type="protein sequence ID" value="EDO36244"/>
    <property type="gene ID" value="NEMVEDRAFT_v1g245604"/>
</dbReference>
<dbReference type="KEGG" id="nve:5507661"/>
<dbReference type="eggNOG" id="KOG1296">
    <property type="taxonomic scope" value="Eukaryota"/>
</dbReference>
<dbReference type="HOGENOM" id="CLU_114688_1_0_1"/>
<dbReference type="InParanoid" id="A7SJ66"/>
<dbReference type="OMA" id="TAHFVWR"/>
<dbReference type="OrthoDB" id="10248838at2759"/>
<dbReference type="PhylomeDB" id="A7SJ66"/>
<dbReference type="Proteomes" id="UP000001593">
    <property type="component" value="Unassembled WGS sequence"/>
</dbReference>
<dbReference type="GO" id="GO:0008270">
    <property type="term" value="F:zinc ion binding"/>
    <property type="evidence" value="ECO:0000250"/>
    <property type="project" value="UniProtKB"/>
</dbReference>
<dbReference type="InterPro" id="IPR008584">
    <property type="entry name" value="CXXC_Zn-binding_euk"/>
</dbReference>
<dbReference type="PANTHER" id="PTHR12857">
    <property type="entry name" value="CXXC MOTIF CONTAINING ZINC BINDING PROTEIN"/>
    <property type="match status" value="1"/>
</dbReference>
<dbReference type="PANTHER" id="PTHR12857:SF0">
    <property type="entry name" value="CXXC MOTIF CONTAINING ZINC BINDING PROTEIN"/>
    <property type="match status" value="1"/>
</dbReference>
<dbReference type="Pfam" id="PF05907">
    <property type="entry name" value="CXXC_Zn-b_euk"/>
    <property type="match status" value="1"/>
</dbReference>
<dbReference type="SUPFAM" id="SSF141678">
    <property type="entry name" value="MAL13P1.257-like"/>
    <property type="match status" value="1"/>
</dbReference>
<keyword id="KW-0479">Metal-binding</keyword>
<keyword id="KW-1185">Reference proteome</keyword>
<keyword id="KW-0862">Zinc</keyword>
<feature type="chain" id="PRO_0000337873" description="UPF0587 protein v1g245604">
    <location>
        <begin position="1"/>
        <end position="159"/>
    </location>
</feature>
<feature type="binding site" evidence="1">
    <location>
        <position position="33"/>
    </location>
    <ligand>
        <name>Zn(2+)</name>
        <dbReference type="ChEBI" id="CHEBI:29105"/>
    </ligand>
</feature>
<feature type="binding site" evidence="1">
    <location>
        <position position="36"/>
    </location>
    <ligand>
        <name>Zn(2+)</name>
        <dbReference type="ChEBI" id="CHEBI:29105"/>
    </ligand>
</feature>
<feature type="binding site" evidence="1">
    <location>
        <position position="67"/>
    </location>
    <ligand>
        <name>Zn(2+)</name>
        <dbReference type="ChEBI" id="CHEBI:29105"/>
    </ligand>
</feature>
<feature type="binding site" evidence="1">
    <location>
        <position position="70"/>
    </location>
    <ligand>
        <name>Zn(2+)</name>
        <dbReference type="ChEBI" id="CHEBI:29105"/>
    </ligand>
</feature>
<accession>A7SJ66</accession>